<feature type="chain" id="PRO_1000083023" description="Co-chaperone protein HscB homolog">
    <location>
        <begin position="1"/>
        <end position="173"/>
    </location>
</feature>
<feature type="domain" description="J" evidence="1">
    <location>
        <begin position="5"/>
        <end position="77"/>
    </location>
</feature>
<dbReference type="EMBL" id="CP000926">
    <property type="protein sequence ID" value="ABY96798.1"/>
    <property type="molecule type" value="Genomic_DNA"/>
</dbReference>
<dbReference type="RefSeq" id="WP_012270593.1">
    <property type="nucleotide sequence ID" value="NC_010322.1"/>
</dbReference>
<dbReference type="SMR" id="B0KPH9"/>
<dbReference type="KEGG" id="ppg:PputGB1_0888"/>
<dbReference type="eggNOG" id="COG1076">
    <property type="taxonomic scope" value="Bacteria"/>
</dbReference>
<dbReference type="HOGENOM" id="CLU_068529_2_0_6"/>
<dbReference type="Proteomes" id="UP000002157">
    <property type="component" value="Chromosome"/>
</dbReference>
<dbReference type="GO" id="GO:1990230">
    <property type="term" value="C:iron-sulfur cluster transfer complex"/>
    <property type="evidence" value="ECO:0007669"/>
    <property type="project" value="TreeGrafter"/>
</dbReference>
<dbReference type="GO" id="GO:0001671">
    <property type="term" value="F:ATPase activator activity"/>
    <property type="evidence" value="ECO:0007669"/>
    <property type="project" value="InterPro"/>
</dbReference>
<dbReference type="GO" id="GO:0051087">
    <property type="term" value="F:protein-folding chaperone binding"/>
    <property type="evidence" value="ECO:0007669"/>
    <property type="project" value="InterPro"/>
</dbReference>
<dbReference type="GO" id="GO:0044571">
    <property type="term" value="P:[2Fe-2S] cluster assembly"/>
    <property type="evidence" value="ECO:0007669"/>
    <property type="project" value="InterPro"/>
</dbReference>
<dbReference type="GO" id="GO:0051259">
    <property type="term" value="P:protein complex oligomerization"/>
    <property type="evidence" value="ECO:0007669"/>
    <property type="project" value="InterPro"/>
</dbReference>
<dbReference type="GO" id="GO:0006457">
    <property type="term" value="P:protein folding"/>
    <property type="evidence" value="ECO:0007669"/>
    <property type="project" value="UniProtKB-UniRule"/>
</dbReference>
<dbReference type="CDD" id="cd06257">
    <property type="entry name" value="DnaJ"/>
    <property type="match status" value="1"/>
</dbReference>
<dbReference type="Gene3D" id="1.10.287.110">
    <property type="entry name" value="DnaJ domain"/>
    <property type="match status" value="1"/>
</dbReference>
<dbReference type="Gene3D" id="1.20.1280.20">
    <property type="entry name" value="HscB, C-terminal domain"/>
    <property type="match status" value="1"/>
</dbReference>
<dbReference type="HAMAP" id="MF_00682">
    <property type="entry name" value="HscB"/>
    <property type="match status" value="1"/>
</dbReference>
<dbReference type="InterPro" id="IPR001623">
    <property type="entry name" value="DnaJ_domain"/>
</dbReference>
<dbReference type="InterPro" id="IPR004640">
    <property type="entry name" value="HscB"/>
</dbReference>
<dbReference type="InterPro" id="IPR036386">
    <property type="entry name" value="HscB_C_sf"/>
</dbReference>
<dbReference type="InterPro" id="IPR009073">
    <property type="entry name" value="HscB_oligo_C"/>
</dbReference>
<dbReference type="InterPro" id="IPR036869">
    <property type="entry name" value="J_dom_sf"/>
</dbReference>
<dbReference type="NCBIfam" id="TIGR00714">
    <property type="entry name" value="hscB"/>
    <property type="match status" value="1"/>
</dbReference>
<dbReference type="NCBIfam" id="NF001420">
    <property type="entry name" value="PRK00294.1"/>
    <property type="match status" value="1"/>
</dbReference>
<dbReference type="PANTHER" id="PTHR14021">
    <property type="entry name" value="IRON-SULFUR CLUSTER CO-CHAPERONE PROTEIN HSCB"/>
    <property type="match status" value="1"/>
</dbReference>
<dbReference type="PANTHER" id="PTHR14021:SF15">
    <property type="entry name" value="IRON-SULFUR CLUSTER CO-CHAPERONE PROTEIN HSCB"/>
    <property type="match status" value="1"/>
</dbReference>
<dbReference type="Pfam" id="PF00226">
    <property type="entry name" value="DnaJ"/>
    <property type="match status" value="1"/>
</dbReference>
<dbReference type="Pfam" id="PF07743">
    <property type="entry name" value="HSCB_C"/>
    <property type="match status" value="1"/>
</dbReference>
<dbReference type="SMART" id="SM00271">
    <property type="entry name" value="DnaJ"/>
    <property type="match status" value="1"/>
</dbReference>
<dbReference type="SUPFAM" id="SSF46565">
    <property type="entry name" value="Chaperone J-domain"/>
    <property type="match status" value="1"/>
</dbReference>
<dbReference type="SUPFAM" id="SSF47144">
    <property type="entry name" value="HSC20 (HSCB), C-terminal oligomerisation domain"/>
    <property type="match status" value="1"/>
</dbReference>
<dbReference type="PROSITE" id="PS50076">
    <property type="entry name" value="DNAJ_2"/>
    <property type="match status" value="1"/>
</dbReference>
<name>HSCB_PSEPG</name>
<reference key="1">
    <citation type="submission" date="2008-01" db="EMBL/GenBank/DDBJ databases">
        <title>Complete sequence of Pseudomonas putida GB-1.</title>
        <authorList>
            <consortium name="US DOE Joint Genome Institute"/>
            <person name="Copeland A."/>
            <person name="Lucas S."/>
            <person name="Lapidus A."/>
            <person name="Barry K."/>
            <person name="Glavina del Rio T."/>
            <person name="Dalin E."/>
            <person name="Tice H."/>
            <person name="Pitluck S."/>
            <person name="Bruce D."/>
            <person name="Goodwin L."/>
            <person name="Chertkov O."/>
            <person name="Brettin T."/>
            <person name="Detter J.C."/>
            <person name="Han C."/>
            <person name="Kuske C.R."/>
            <person name="Schmutz J."/>
            <person name="Larimer F."/>
            <person name="Land M."/>
            <person name="Hauser L."/>
            <person name="Kyrpides N."/>
            <person name="Kim E."/>
            <person name="McCarthy J.K."/>
            <person name="Richardson P."/>
        </authorList>
    </citation>
    <scope>NUCLEOTIDE SEQUENCE [LARGE SCALE GENOMIC DNA]</scope>
    <source>
        <strain>GB-1</strain>
    </source>
</reference>
<accession>B0KPH9</accession>
<gene>
    <name evidence="1" type="primary">hscB</name>
    <name type="ordered locus">PputGB1_0888</name>
</gene>
<organism>
    <name type="scientific">Pseudomonas putida (strain GB-1)</name>
    <dbReference type="NCBI Taxonomy" id="76869"/>
    <lineage>
        <taxon>Bacteria</taxon>
        <taxon>Pseudomonadati</taxon>
        <taxon>Pseudomonadota</taxon>
        <taxon>Gammaproteobacteria</taxon>
        <taxon>Pseudomonadales</taxon>
        <taxon>Pseudomonadaceae</taxon>
        <taxon>Pseudomonas</taxon>
    </lineage>
</organism>
<protein>
    <recommendedName>
        <fullName evidence="1">Co-chaperone protein HscB homolog</fullName>
    </recommendedName>
</protein>
<proteinExistence type="inferred from homology"/>
<comment type="function">
    <text evidence="1">Co-chaperone involved in the maturation of iron-sulfur cluster-containing proteins. Seems to help targeting proteins to be folded toward HscA.</text>
</comment>
<comment type="subunit">
    <text evidence="1">Interacts with HscA and stimulates its ATPase activity.</text>
</comment>
<comment type="similarity">
    <text evidence="1">Belongs to the HscB family.</text>
</comment>
<sequence>MGTPCHYALFDLQPSFRLDLDKLATRYRELAREVHPDRFADASEREQRIALEKSAALNDAYQTLRSAPRRARYLLAISGHEVPQEVTVHDPDFLLQQMQWREELEELQDEADLDGVGVFKKRLKFAQDTLNEDFAACWDAPGERDKAERLMRRMQFLDKLAQEVRQLEERLDD</sequence>
<keyword id="KW-0143">Chaperone</keyword>
<evidence type="ECO:0000255" key="1">
    <source>
        <dbReference type="HAMAP-Rule" id="MF_00682"/>
    </source>
</evidence>